<sequence>MAGKMINKMMGFLGLEDDLEEDIEEVEEGKNTKNDFTDVESIMNSKRQNKVVSIHTTISAKVRIVKPTTYEEAADICDELKNRKIIVINTTGLETRIAQRLLDFMGGASYALGGDLEEIEKGVYILSPSSVEVSSDLKNELSAKKIFGWK</sequence>
<keyword id="KW-0131">Cell cycle</keyword>
<keyword id="KW-0132">Cell division</keyword>
<keyword id="KW-0963">Cytoplasm</keyword>
<keyword id="KW-0717">Septation</keyword>
<organism>
    <name type="scientific">Clostridium kluyveri (strain NBRC 12016)</name>
    <dbReference type="NCBI Taxonomy" id="583346"/>
    <lineage>
        <taxon>Bacteria</taxon>
        <taxon>Bacillati</taxon>
        <taxon>Bacillota</taxon>
        <taxon>Clostridia</taxon>
        <taxon>Eubacteriales</taxon>
        <taxon>Clostridiaceae</taxon>
        <taxon>Clostridium</taxon>
    </lineage>
</organism>
<reference key="1">
    <citation type="submission" date="2005-09" db="EMBL/GenBank/DDBJ databases">
        <title>Complete genome sequence of Clostridium kluyveri and comparative genomics of Clostridia species.</title>
        <authorList>
            <person name="Inui M."/>
            <person name="Nonaka H."/>
            <person name="Shinoda Y."/>
            <person name="Ikenaga Y."/>
            <person name="Abe M."/>
            <person name="Naito K."/>
            <person name="Vertes A.A."/>
            <person name="Yukawa H."/>
        </authorList>
    </citation>
    <scope>NUCLEOTIDE SEQUENCE [LARGE SCALE GENOMIC DNA]</scope>
    <source>
        <strain>NBRC 12016</strain>
    </source>
</reference>
<comment type="function">
    <text evidence="1">Cell division protein that is part of the divisome complex and is recruited early to the Z-ring. Probably stimulates Z-ring formation, perhaps through the cross-linking of FtsZ protofilaments. Its function overlaps with FtsA.</text>
</comment>
<comment type="subunit">
    <text evidence="1">Homodimer. Interacts with FtsZ.</text>
</comment>
<comment type="subcellular location">
    <subcellularLocation>
        <location evidence="1">Cytoplasm</location>
    </subcellularLocation>
    <text evidence="1">Localizes to the division site, in a FtsZ-dependent manner.</text>
</comment>
<comment type="similarity">
    <text evidence="1">Belongs to the SepF family.</text>
</comment>
<dbReference type="EMBL" id="AP009049">
    <property type="protein sequence ID" value="BAH06142.1"/>
    <property type="molecule type" value="Genomic_DNA"/>
</dbReference>
<dbReference type="RefSeq" id="WP_012101574.1">
    <property type="nucleotide sequence ID" value="NC_011837.1"/>
</dbReference>
<dbReference type="SMR" id="B9E0W7"/>
<dbReference type="KEGG" id="ckr:CKR_1091"/>
<dbReference type="HOGENOM" id="CLU_078499_4_0_9"/>
<dbReference type="Proteomes" id="UP000007969">
    <property type="component" value="Chromosome"/>
</dbReference>
<dbReference type="GO" id="GO:0005737">
    <property type="term" value="C:cytoplasm"/>
    <property type="evidence" value="ECO:0007669"/>
    <property type="project" value="UniProtKB-SubCell"/>
</dbReference>
<dbReference type="GO" id="GO:0000917">
    <property type="term" value="P:division septum assembly"/>
    <property type="evidence" value="ECO:0007669"/>
    <property type="project" value="UniProtKB-KW"/>
</dbReference>
<dbReference type="GO" id="GO:0043093">
    <property type="term" value="P:FtsZ-dependent cytokinesis"/>
    <property type="evidence" value="ECO:0007669"/>
    <property type="project" value="UniProtKB-UniRule"/>
</dbReference>
<dbReference type="Gene3D" id="3.30.110.150">
    <property type="entry name" value="SepF-like protein"/>
    <property type="match status" value="1"/>
</dbReference>
<dbReference type="HAMAP" id="MF_01197">
    <property type="entry name" value="SepF"/>
    <property type="match status" value="1"/>
</dbReference>
<dbReference type="InterPro" id="IPR023052">
    <property type="entry name" value="Cell_div_SepF"/>
</dbReference>
<dbReference type="InterPro" id="IPR007561">
    <property type="entry name" value="Cell_div_SepF/SepF-rel"/>
</dbReference>
<dbReference type="InterPro" id="IPR038594">
    <property type="entry name" value="SepF-like_sf"/>
</dbReference>
<dbReference type="PANTHER" id="PTHR35798">
    <property type="entry name" value="CELL DIVISION PROTEIN SEPF"/>
    <property type="match status" value="1"/>
</dbReference>
<dbReference type="PANTHER" id="PTHR35798:SF1">
    <property type="entry name" value="CELL DIVISION PROTEIN SEPF"/>
    <property type="match status" value="1"/>
</dbReference>
<dbReference type="Pfam" id="PF04472">
    <property type="entry name" value="SepF"/>
    <property type="match status" value="1"/>
</dbReference>
<name>SEPF_CLOK1</name>
<evidence type="ECO:0000255" key="1">
    <source>
        <dbReference type="HAMAP-Rule" id="MF_01197"/>
    </source>
</evidence>
<protein>
    <recommendedName>
        <fullName evidence="1">Cell division protein SepF</fullName>
    </recommendedName>
</protein>
<proteinExistence type="inferred from homology"/>
<gene>
    <name evidence="1" type="primary">sepF</name>
    <name type="ordered locus">CKR_1091</name>
</gene>
<feature type="chain" id="PRO_1000164533" description="Cell division protein SepF">
    <location>
        <begin position="1"/>
        <end position="150"/>
    </location>
</feature>
<accession>B9E0W7</accession>